<protein>
    <recommendedName>
        <fullName evidence="1">Large ribosomal subunit protein bL27</fullName>
    </recommendedName>
    <alternativeName>
        <fullName evidence="3">50S ribosomal protein L27</fullName>
    </alternativeName>
</protein>
<keyword id="KW-1185">Reference proteome</keyword>
<keyword id="KW-0687">Ribonucleoprotein</keyword>
<keyword id="KW-0689">Ribosomal protein</keyword>
<accession>Q5R033</accession>
<feature type="chain" id="PRO_0000181101" description="Large ribosomal subunit protein bL27">
    <location>
        <begin position="1"/>
        <end position="85"/>
    </location>
</feature>
<feature type="region of interest" description="Disordered" evidence="2">
    <location>
        <begin position="1"/>
        <end position="22"/>
    </location>
</feature>
<evidence type="ECO:0000255" key="1">
    <source>
        <dbReference type="HAMAP-Rule" id="MF_00539"/>
    </source>
</evidence>
<evidence type="ECO:0000256" key="2">
    <source>
        <dbReference type="SAM" id="MobiDB-lite"/>
    </source>
</evidence>
<evidence type="ECO:0000305" key="3"/>
<name>RL27_IDILO</name>
<sequence length="85" mass="9031">MAHKKAGGSTKNGRDSESKRLGVKRFGGESVLAGNILVRQRGTKFHAGANVGIGKDHTLFATSEGKVSFDVKGSKNRKFVSVITD</sequence>
<reference key="1">
    <citation type="journal article" date="2004" name="Proc. Natl. Acad. Sci. U.S.A.">
        <title>Genome sequence of the deep-sea gamma-proteobacterium Idiomarina loihiensis reveals amino acid fermentation as a source of carbon and energy.</title>
        <authorList>
            <person name="Hou S."/>
            <person name="Saw J.H."/>
            <person name="Lee K.S."/>
            <person name="Freitas T.A."/>
            <person name="Belisle C."/>
            <person name="Kawarabayasi Y."/>
            <person name="Donachie S.P."/>
            <person name="Pikina A."/>
            <person name="Galperin M.Y."/>
            <person name="Koonin E.V."/>
            <person name="Makarova K.S."/>
            <person name="Omelchenko M.V."/>
            <person name="Sorokin A."/>
            <person name="Wolf Y.I."/>
            <person name="Li Q.X."/>
            <person name="Keum Y.S."/>
            <person name="Campbell S."/>
            <person name="Denery J."/>
            <person name="Aizawa S."/>
            <person name="Shibata S."/>
            <person name="Malahoff A."/>
            <person name="Alam M."/>
        </authorList>
    </citation>
    <scope>NUCLEOTIDE SEQUENCE [LARGE SCALE GENOMIC DNA]</scope>
    <source>
        <strain>ATCC BAA-735 / DSM 15497 / L2-TR</strain>
    </source>
</reference>
<proteinExistence type="inferred from homology"/>
<comment type="similarity">
    <text evidence="1">Belongs to the bacterial ribosomal protein bL27 family.</text>
</comment>
<dbReference type="EMBL" id="AE017340">
    <property type="protein sequence ID" value="AAV81319.1"/>
    <property type="molecule type" value="Genomic_DNA"/>
</dbReference>
<dbReference type="RefSeq" id="WP_011233737.1">
    <property type="nucleotide sequence ID" value="NC_006512.1"/>
</dbReference>
<dbReference type="SMR" id="Q5R033"/>
<dbReference type="STRING" id="283942.IL0476"/>
<dbReference type="GeneID" id="41335627"/>
<dbReference type="KEGG" id="ilo:IL0476"/>
<dbReference type="eggNOG" id="COG0211">
    <property type="taxonomic scope" value="Bacteria"/>
</dbReference>
<dbReference type="HOGENOM" id="CLU_095424_4_1_6"/>
<dbReference type="OrthoDB" id="9803474at2"/>
<dbReference type="Proteomes" id="UP000001171">
    <property type="component" value="Chromosome"/>
</dbReference>
<dbReference type="GO" id="GO:0022625">
    <property type="term" value="C:cytosolic large ribosomal subunit"/>
    <property type="evidence" value="ECO:0007669"/>
    <property type="project" value="TreeGrafter"/>
</dbReference>
<dbReference type="GO" id="GO:0003735">
    <property type="term" value="F:structural constituent of ribosome"/>
    <property type="evidence" value="ECO:0007669"/>
    <property type="project" value="InterPro"/>
</dbReference>
<dbReference type="GO" id="GO:0006412">
    <property type="term" value="P:translation"/>
    <property type="evidence" value="ECO:0007669"/>
    <property type="project" value="UniProtKB-UniRule"/>
</dbReference>
<dbReference type="FunFam" id="2.40.50.100:FF:000001">
    <property type="entry name" value="50S ribosomal protein L27"/>
    <property type="match status" value="1"/>
</dbReference>
<dbReference type="Gene3D" id="2.40.50.100">
    <property type="match status" value="1"/>
</dbReference>
<dbReference type="HAMAP" id="MF_00539">
    <property type="entry name" value="Ribosomal_bL27"/>
    <property type="match status" value="1"/>
</dbReference>
<dbReference type="InterPro" id="IPR001684">
    <property type="entry name" value="Ribosomal_bL27"/>
</dbReference>
<dbReference type="InterPro" id="IPR018261">
    <property type="entry name" value="Ribosomal_bL27_CS"/>
</dbReference>
<dbReference type="NCBIfam" id="TIGR00062">
    <property type="entry name" value="L27"/>
    <property type="match status" value="1"/>
</dbReference>
<dbReference type="PANTHER" id="PTHR15893:SF0">
    <property type="entry name" value="LARGE RIBOSOMAL SUBUNIT PROTEIN BL27M"/>
    <property type="match status" value="1"/>
</dbReference>
<dbReference type="PANTHER" id="PTHR15893">
    <property type="entry name" value="RIBOSOMAL PROTEIN L27"/>
    <property type="match status" value="1"/>
</dbReference>
<dbReference type="Pfam" id="PF01016">
    <property type="entry name" value="Ribosomal_L27"/>
    <property type="match status" value="1"/>
</dbReference>
<dbReference type="PRINTS" id="PR00063">
    <property type="entry name" value="RIBOSOMALL27"/>
</dbReference>
<dbReference type="SUPFAM" id="SSF110324">
    <property type="entry name" value="Ribosomal L27 protein-like"/>
    <property type="match status" value="1"/>
</dbReference>
<dbReference type="PROSITE" id="PS00831">
    <property type="entry name" value="RIBOSOMAL_L27"/>
    <property type="match status" value="1"/>
</dbReference>
<gene>
    <name evidence="1" type="primary">rpmA</name>
    <name type="ordered locus">IL0476</name>
</gene>
<organism>
    <name type="scientific">Idiomarina loihiensis (strain ATCC BAA-735 / DSM 15497 / L2-TR)</name>
    <dbReference type="NCBI Taxonomy" id="283942"/>
    <lineage>
        <taxon>Bacteria</taxon>
        <taxon>Pseudomonadati</taxon>
        <taxon>Pseudomonadota</taxon>
        <taxon>Gammaproteobacteria</taxon>
        <taxon>Alteromonadales</taxon>
        <taxon>Idiomarinaceae</taxon>
        <taxon>Idiomarina</taxon>
    </lineage>
</organism>